<sequence length="227" mass="25464">MLTVPGLCWLCRMPLALSHWGICSVCARAVRQRVSLCPQCGLPAGHPSLPCGRCLQKPPPWQRLVSVSDYTPPLSLLVHQLKFTRRSEIAAALARLLLQEVLMARRSTGLPLPDRIVSVPLWSRRHWRRGFNQSDLLCQPLAHWLGCAWDSQTITRVRATATQHHLSARLRKRNLKNAFRLELPVQGLHMVIVDDVVTTGSTVAEIAQLLLRNGAATVQVWCLCRTL</sequence>
<organism>
    <name type="scientific">Salmonella typhi</name>
    <dbReference type="NCBI Taxonomy" id="90370"/>
    <lineage>
        <taxon>Bacteria</taxon>
        <taxon>Pseudomonadati</taxon>
        <taxon>Pseudomonadota</taxon>
        <taxon>Gammaproteobacteria</taxon>
        <taxon>Enterobacterales</taxon>
        <taxon>Enterobacteriaceae</taxon>
        <taxon>Salmonella</taxon>
    </lineage>
</organism>
<dbReference type="EMBL" id="AL513382">
    <property type="protein sequence ID" value="CAD08104.1"/>
    <property type="molecule type" value="Genomic_DNA"/>
</dbReference>
<dbReference type="EMBL" id="AE014613">
    <property type="protein sequence ID" value="AAO71466.1"/>
    <property type="molecule type" value="Genomic_DNA"/>
</dbReference>
<dbReference type="RefSeq" id="NP_458394.1">
    <property type="nucleotide sequence ID" value="NC_003198.1"/>
</dbReference>
<dbReference type="RefSeq" id="WP_000958739.1">
    <property type="nucleotide sequence ID" value="NZ_WSUR01000001.1"/>
</dbReference>
<dbReference type="STRING" id="220341.gene:17588117"/>
<dbReference type="KEGG" id="stt:t3996"/>
<dbReference type="KEGG" id="sty:STY4286"/>
<dbReference type="PATRIC" id="fig|220341.7.peg.4380"/>
<dbReference type="eggNOG" id="COG1040">
    <property type="taxonomic scope" value="Bacteria"/>
</dbReference>
<dbReference type="HOGENOM" id="CLU_054549_0_2_6"/>
<dbReference type="OMA" id="DAAYWNE"/>
<dbReference type="OrthoDB" id="9793412at2"/>
<dbReference type="Proteomes" id="UP000000541">
    <property type="component" value="Chromosome"/>
</dbReference>
<dbReference type="Proteomes" id="UP000002670">
    <property type="component" value="Chromosome"/>
</dbReference>
<dbReference type="CDD" id="cd06223">
    <property type="entry name" value="PRTases_typeI"/>
    <property type="match status" value="1"/>
</dbReference>
<dbReference type="FunFam" id="3.40.50.2020:FF:000054">
    <property type="entry name" value="ComF family protein"/>
    <property type="match status" value="1"/>
</dbReference>
<dbReference type="Gene3D" id="3.40.50.2020">
    <property type="match status" value="1"/>
</dbReference>
<dbReference type="InterPro" id="IPR051910">
    <property type="entry name" value="ComF/GntX_DNA_util-trans"/>
</dbReference>
<dbReference type="InterPro" id="IPR005222">
    <property type="entry name" value="Competence_ComF"/>
</dbReference>
<dbReference type="InterPro" id="IPR000836">
    <property type="entry name" value="PRibTrfase_dom"/>
</dbReference>
<dbReference type="InterPro" id="IPR029057">
    <property type="entry name" value="PRTase-like"/>
</dbReference>
<dbReference type="NCBIfam" id="TIGR00201">
    <property type="entry name" value="comF"/>
    <property type="match status" value="1"/>
</dbReference>
<dbReference type="NCBIfam" id="NF008616">
    <property type="entry name" value="PRK11595.1"/>
    <property type="match status" value="1"/>
</dbReference>
<dbReference type="PANTHER" id="PTHR47505">
    <property type="entry name" value="DNA UTILIZATION PROTEIN YHGH"/>
    <property type="match status" value="1"/>
</dbReference>
<dbReference type="PANTHER" id="PTHR47505:SF1">
    <property type="entry name" value="DNA UTILIZATION PROTEIN YHGH"/>
    <property type="match status" value="1"/>
</dbReference>
<dbReference type="Pfam" id="PF00156">
    <property type="entry name" value="Pribosyltran"/>
    <property type="match status" value="1"/>
</dbReference>
<dbReference type="SUPFAM" id="SSF53271">
    <property type="entry name" value="PRTase-like"/>
    <property type="match status" value="1"/>
</dbReference>
<evidence type="ECO:0000250" key="1"/>
<evidence type="ECO:0000305" key="2"/>
<name>GNTX_SALTI</name>
<comment type="function">
    <text evidence="1">Could be involved in gluconate metabolism.</text>
</comment>
<comment type="similarity">
    <text evidence="2">Belongs to the ComF/GntX family.</text>
</comment>
<feature type="chain" id="PRO_0000209461" description="DNA utilization protein YhgH">
    <location>
        <begin position="1"/>
        <end position="227"/>
    </location>
</feature>
<gene>
    <name type="primary">gntX</name>
    <name type="ordered locus">STY4286</name>
    <name type="ordered locus">t3996</name>
</gene>
<protein>
    <recommendedName>
        <fullName>DNA utilization protein YhgH</fullName>
    </recommendedName>
    <alternativeName>
        <fullName>Protein GntX</fullName>
    </alternativeName>
</protein>
<proteinExistence type="inferred from homology"/>
<accession>Q8Z222</accession>
<accession>Q7C5W0</accession>
<reference key="1">
    <citation type="journal article" date="2001" name="Nature">
        <title>Complete genome sequence of a multiple drug resistant Salmonella enterica serovar Typhi CT18.</title>
        <authorList>
            <person name="Parkhill J."/>
            <person name="Dougan G."/>
            <person name="James K.D."/>
            <person name="Thomson N.R."/>
            <person name="Pickard D."/>
            <person name="Wain J."/>
            <person name="Churcher C.M."/>
            <person name="Mungall K.L."/>
            <person name="Bentley S.D."/>
            <person name="Holden M.T.G."/>
            <person name="Sebaihia M."/>
            <person name="Baker S."/>
            <person name="Basham D."/>
            <person name="Brooks K."/>
            <person name="Chillingworth T."/>
            <person name="Connerton P."/>
            <person name="Cronin A."/>
            <person name="Davis P."/>
            <person name="Davies R.M."/>
            <person name="Dowd L."/>
            <person name="White N."/>
            <person name="Farrar J."/>
            <person name="Feltwell T."/>
            <person name="Hamlin N."/>
            <person name="Haque A."/>
            <person name="Hien T.T."/>
            <person name="Holroyd S."/>
            <person name="Jagels K."/>
            <person name="Krogh A."/>
            <person name="Larsen T.S."/>
            <person name="Leather S."/>
            <person name="Moule S."/>
            <person name="O'Gaora P."/>
            <person name="Parry C."/>
            <person name="Quail M.A."/>
            <person name="Rutherford K.M."/>
            <person name="Simmonds M."/>
            <person name="Skelton J."/>
            <person name="Stevens K."/>
            <person name="Whitehead S."/>
            <person name="Barrell B.G."/>
        </authorList>
    </citation>
    <scope>NUCLEOTIDE SEQUENCE [LARGE SCALE GENOMIC DNA]</scope>
    <source>
        <strain>CT18</strain>
    </source>
</reference>
<reference key="2">
    <citation type="journal article" date="2003" name="J. Bacteriol.">
        <title>Comparative genomics of Salmonella enterica serovar Typhi strains Ty2 and CT18.</title>
        <authorList>
            <person name="Deng W."/>
            <person name="Liou S.-R."/>
            <person name="Plunkett G. III"/>
            <person name="Mayhew G.F."/>
            <person name="Rose D.J."/>
            <person name="Burland V."/>
            <person name="Kodoyianni V."/>
            <person name="Schwartz D.C."/>
            <person name="Blattner F.R."/>
        </authorList>
    </citation>
    <scope>NUCLEOTIDE SEQUENCE [LARGE SCALE GENOMIC DNA]</scope>
    <source>
        <strain>ATCC 700931 / Ty2</strain>
    </source>
</reference>